<reference key="1">
    <citation type="journal article" date="2006" name="Proc. Natl. Acad. Sci. U.S.A.">
        <title>Genome reduction in Leptospira borgpetersenii reflects limited transmission potential.</title>
        <authorList>
            <person name="Bulach D.M."/>
            <person name="Zuerner R.L."/>
            <person name="Wilson P."/>
            <person name="Seemann T."/>
            <person name="McGrath A."/>
            <person name="Cullen P.A."/>
            <person name="Davis J."/>
            <person name="Johnson M."/>
            <person name="Kuczek E."/>
            <person name="Alt D.P."/>
            <person name="Peterson-Burch B."/>
            <person name="Coppel R.L."/>
            <person name="Rood J.I."/>
            <person name="Davies J.K."/>
            <person name="Adler B."/>
        </authorList>
    </citation>
    <scope>NUCLEOTIDE SEQUENCE [LARGE SCALE GENOMIC DNA]</scope>
    <source>
        <strain>JB197</strain>
    </source>
</reference>
<proteinExistence type="inferred from homology"/>
<feature type="chain" id="PRO_1000045330" description="Probable transcriptional regulatory protein LBJ_0543">
    <location>
        <begin position="1"/>
        <end position="249"/>
    </location>
</feature>
<accession>Q04V34</accession>
<name>Y543_LEPBJ</name>
<dbReference type="EMBL" id="CP000350">
    <property type="protein sequence ID" value="ABJ75236.1"/>
    <property type="molecule type" value="Genomic_DNA"/>
</dbReference>
<dbReference type="RefSeq" id="WP_011671557.1">
    <property type="nucleotide sequence ID" value="NC_008510.1"/>
</dbReference>
<dbReference type="SMR" id="Q04V34"/>
<dbReference type="KEGG" id="lbj:LBJ_0543"/>
<dbReference type="HOGENOM" id="CLU_062974_2_2_12"/>
<dbReference type="Proteomes" id="UP000000656">
    <property type="component" value="Chromosome 1"/>
</dbReference>
<dbReference type="GO" id="GO:0005829">
    <property type="term" value="C:cytosol"/>
    <property type="evidence" value="ECO:0007669"/>
    <property type="project" value="TreeGrafter"/>
</dbReference>
<dbReference type="GO" id="GO:0003677">
    <property type="term" value="F:DNA binding"/>
    <property type="evidence" value="ECO:0007669"/>
    <property type="project" value="UniProtKB-UniRule"/>
</dbReference>
<dbReference type="GO" id="GO:0006355">
    <property type="term" value="P:regulation of DNA-templated transcription"/>
    <property type="evidence" value="ECO:0007669"/>
    <property type="project" value="UniProtKB-UniRule"/>
</dbReference>
<dbReference type="FunFam" id="1.10.10.200:FF:000002">
    <property type="entry name" value="Probable transcriptional regulatory protein CLM62_37755"/>
    <property type="match status" value="1"/>
</dbReference>
<dbReference type="Gene3D" id="1.10.10.200">
    <property type="match status" value="1"/>
</dbReference>
<dbReference type="Gene3D" id="3.30.70.980">
    <property type="match status" value="2"/>
</dbReference>
<dbReference type="HAMAP" id="MF_00693">
    <property type="entry name" value="Transcrip_reg_TACO1"/>
    <property type="match status" value="1"/>
</dbReference>
<dbReference type="InterPro" id="IPR017856">
    <property type="entry name" value="Integrase-like_N"/>
</dbReference>
<dbReference type="InterPro" id="IPR048300">
    <property type="entry name" value="TACO1_YebC-like_2nd/3rd_dom"/>
</dbReference>
<dbReference type="InterPro" id="IPR049083">
    <property type="entry name" value="TACO1_YebC_N"/>
</dbReference>
<dbReference type="InterPro" id="IPR002876">
    <property type="entry name" value="Transcrip_reg_TACO1-like"/>
</dbReference>
<dbReference type="InterPro" id="IPR026564">
    <property type="entry name" value="Transcrip_reg_TACO1-like_dom3"/>
</dbReference>
<dbReference type="InterPro" id="IPR029072">
    <property type="entry name" value="YebC-like"/>
</dbReference>
<dbReference type="NCBIfam" id="NF001030">
    <property type="entry name" value="PRK00110.1"/>
    <property type="match status" value="1"/>
</dbReference>
<dbReference type="NCBIfam" id="NF009044">
    <property type="entry name" value="PRK12378.1"/>
    <property type="match status" value="1"/>
</dbReference>
<dbReference type="NCBIfam" id="TIGR01033">
    <property type="entry name" value="YebC/PmpR family DNA-binding transcriptional regulator"/>
    <property type="match status" value="1"/>
</dbReference>
<dbReference type="PANTHER" id="PTHR12532:SF6">
    <property type="entry name" value="TRANSCRIPTIONAL REGULATORY PROTEIN YEBC-RELATED"/>
    <property type="match status" value="1"/>
</dbReference>
<dbReference type="PANTHER" id="PTHR12532">
    <property type="entry name" value="TRANSLATIONAL ACTIVATOR OF CYTOCHROME C OXIDASE 1"/>
    <property type="match status" value="1"/>
</dbReference>
<dbReference type="Pfam" id="PF20772">
    <property type="entry name" value="TACO1_YebC_N"/>
    <property type="match status" value="1"/>
</dbReference>
<dbReference type="Pfam" id="PF01709">
    <property type="entry name" value="Transcrip_reg"/>
    <property type="match status" value="1"/>
</dbReference>
<dbReference type="SUPFAM" id="SSF75625">
    <property type="entry name" value="YebC-like"/>
    <property type="match status" value="1"/>
</dbReference>
<keyword id="KW-0963">Cytoplasm</keyword>
<keyword id="KW-0238">DNA-binding</keyword>
<keyword id="KW-0804">Transcription</keyword>
<keyword id="KW-0805">Transcription regulation</keyword>
<evidence type="ECO:0000255" key="1">
    <source>
        <dbReference type="HAMAP-Rule" id="MF_00693"/>
    </source>
</evidence>
<gene>
    <name type="ordered locus">LBJ_0543</name>
</gene>
<sequence length="249" mass="26989">MSGHSKWATIKRKKDAIDSKRGAIFTRVGKEITVAAKMGGGDPEGNPRLRLAILKAKSVNMPKDNIERAIKKGTGELEGVVYEECLYECFGPAGIAIMVSAVTDKKSRTTPEIKSILTKLGGSLATSGSVSRLFEKKGVIVLESSQIGEDKLVDLAVGEGAEDVINEGEVYRVITTPDDYESVLHALNEKGLKSEESEIRYIALVSSEIADKEVAKKVMKLIEQLDGHDDVTSVTSNFELAASLEKEFE</sequence>
<protein>
    <recommendedName>
        <fullName evidence="1">Probable transcriptional regulatory protein LBJ_0543</fullName>
    </recommendedName>
</protein>
<organism>
    <name type="scientific">Leptospira borgpetersenii serovar Hardjo-bovis (strain JB197)</name>
    <dbReference type="NCBI Taxonomy" id="355277"/>
    <lineage>
        <taxon>Bacteria</taxon>
        <taxon>Pseudomonadati</taxon>
        <taxon>Spirochaetota</taxon>
        <taxon>Spirochaetia</taxon>
        <taxon>Leptospirales</taxon>
        <taxon>Leptospiraceae</taxon>
        <taxon>Leptospira</taxon>
    </lineage>
</organism>
<comment type="subcellular location">
    <subcellularLocation>
        <location evidence="1">Cytoplasm</location>
    </subcellularLocation>
</comment>
<comment type="similarity">
    <text evidence="1">Belongs to the TACO1 family.</text>
</comment>